<gene>
    <name evidence="1" type="primary">rsmH</name>
    <name type="synonym">mraW</name>
    <name type="ordered locus">amb3840</name>
</gene>
<dbReference type="EC" id="2.1.1.199" evidence="1"/>
<dbReference type="EMBL" id="AP007255">
    <property type="protein sequence ID" value="BAE52644.1"/>
    <property type="molecule type" value="Genomic_DNA"/>
</dbReference>
<dbReference type="RefSeq" id="WP_011386194.1">
    <property type="nucleotide sequence ID" value="NC_007626.1"/>
</dbReference>
<dbReference type="SMR" id="Q2W0I1"/>
<dbReference type="STRING" id="342108.amb3840"/>
<dbReference type="KEGG" id="mag:amb3840"/>
<dbReference type="HOGENOM" id="CLU_038422_1_1_5"/>
<dbReference type="OrthoDB" id="9806637at2"/>
<dbReference type="Proteomes" id="UP000007058">
    <property type="component" value="Chromosome"/>
</dbReference>
<dbReference type="GO" id="GO:0005737">
    <property type="term" value="C:cytoplasm"/>
    <property type="evidence" value="ECO:0007669"/>
    <property type="project" value="UniProtKB-SubCell"/>
</dbReference>
<dbReference type="GO" id="GO:0071424">
    <property type="term" value="F:rRNA (cytosine-N4-)-methyltransferase activity"/>
    <property type="evidence" value="ECO:0007669"/>
    <property type="project" value="UniProtKB-UniRule"/>
</dbReference>
<dbReference type="GO" id="GO:0070475">
    <property type="term" value="P:rRNA base methylation"/>
    <property type="evidence" value="ECO:0007669"/>
    <property type="project" value="UniProtKB-UniRule"/>
</dbReference>
<dbReference type="FunFam" id="1.10.150.170:FF:000003">
    <property type="entry name" value="Ribosomal RNA small subunit methyltransferase H"/>
    <property type="match status" value="1"/>
</dbReference>
<dbReference type="Gene3D" id="1.10.150.170">
    <property type="entry name" value="Putative methyltransferase TM0872, insert domain"/>
    <property type="match status" value="1"/>
</dbReference>
<dbReference type="Gene3D" id="3.40.50.150">
    <property type="entry name" value="Vaccinia Virus protein VP39"/>
    <property type="match status" value="1"/>
</dbReference>
<dbReference type="HAMAP" id="MF_01007">
    <property type="entry name" value="16SrRNA_methyltr_H"/>
    <property type="match status" value="1"/>
</dbReference>
<dbReference type="InterPro" id="IPR002903">
    <property type="entry name" value="RsmH"/>
</dbReference>
<dbReference type="InterPro" id="IPR023397">
    <property type="entry name" value="SAM-dep_MeTrfase_MraW_recog"/>
</dbReference>
<dbReference type="InterPro" id="IPR029063">
    <property type="entry name" value="SAM-dependent_MTases_sf"/>
</dbReference>
<dbReference type="NCBIfam" id="TIGR00006">
    <property type="entry name" value="16S rRNA (cytosine(1402)-N(4))-methyltransferase RsmH"/>
    <property type="match status" value="1"/>
</dbReference>
<dbReference type="PANTHER" id="PTHR11265:SF0">
    <property type="entry name" value="12S RRNA N4-METHYLCYTIDINE METHYLTRANSFERASE"/>
    <property type="match status" value="1"/>
</dbReference>
<dbReference type="PANTHER" id="PTHR11265">
    <property type="entry name" value="S-ADENOSYL-METHYLTRANSFERASE MRAW"/>
    <property type="match status" value="1"/>
</dbReference>
<dbReference type="Pfam" id="PF01795">
    <property type="entry name" value="Methyltransf_5"/>
    <property type="match status" value="1"/>
</dbReference>
<dbReference type="PIRSF" id="PIRSF004486">
    <property type="entry name" value="MraW"/>
    <property type="match status" value="1"/>
</dbReference>
<dbReference type="SUPFAM" id="SSF81799">
    <property type="entry name" value="Putative methyltransferase TM0872, insert domain"/>
    <property type="match status" value="1"/>
</dbReference>
<dbReference type="SUPFAM" id="SSF53335">
    <property type="entry name" value="S-adenosyl-L-methionine-dependent methyltransferases"/>
    <property type="match status" value="1"/>
</dbReference>
<sequence>MSPQPHIPVLLAEVIAALAPRNDGVYLDGTFGAGGYSRAILAASACRVWAIDRDPTAVARGKLLEEGSAGRFSMIEGRFGDMDSLLRQQGVNQVDGIALDIGVSSMQIDQPERGFSFAKDGPLDMRMETKGPSAADMVNDTPETELANIIYRYGEERLSRRVAKAIVEARRLKRFERTGELAEVVRKVVPRSGDGIDPATRTFQALRIAVNDELGELERGLEAAERLLAPGGHLAVVTFHSLEDRVVKSFLKARSGEAARPSRHVPQAQGSGPAASFALLSRKAIGPAPDEARANPRARSAKLRAAARTAAPAWETVS</sequence>
<protein>
    <recommendedName>
        <fullName evidence="1">Ribosomal RNA small subunit methyltransferase H</fullName>
        <ecNumber evidence="1">2.1.1.199</ecNumber>
    </recommendedName>
    <alternativeName>
        <fullName evidence="1">16S rRNA m(4)C1402 methyltransferase</fullName>
    </alternativeName>
    <alternativeName>
        <fullName evidence="1">rRNA (cytosine-N(4)-)-methyltransferase RsmH</fullName>
    </alternativeName>
</protein>
<name>RSMH_PARM1</name>
<accession>Q2W0I1</accession>
<feature type="chain" id="PRO_0000386967" description="Ribosomal RNA small subunit methyltransferase H">
    <location>
        <begin position="1"/>
        <end position="318"/>
    </location>
</feature>
<feature type="region of interest" description="Disordered" evidence="2">
    <location>
        <begin position="286"/>
        <end position="318"/>
    </location>
</feature>
<feature type="compositionally biased region" description="Low complexity" evidence="2">
    <location>
        <begin position="303"/>
        <end position="318"/>
    </location>
</feature>
<feature type="binding site" evidence="1">
    <location>
        <begin position="34"/>
        <end position="36"/>
    </location>
    <ligand>
        <name>S-adenosyl-L-methionine</name>
        <dbReference type="ChEBI" id="CHEBI:59789"/>
    </ligand>
</feature>
<feature type="binding site" evidence="1">
    <location>
        <position position="52"/>
    </location>
    <ligand>
        <name>S-adenosyl-L-methionine</name>
        <dbReference type="ChEBI" id="CHEBI:59789"/>
    </ligand>
</feature>
<feature type="binding site" evidence="1">
    <location>
        <position position="79"/>
    </location>
    <ligand>
        <name>S-adenosyl-L-methionine</name>
        <dbReference type="ChEBI" id="CHEBI:59789"/>
    </ligand>
</feature>
<feature type="binding site" evidence="1">
    <location>
        <position position="100"/>
    </location>
    <ligand>
        <name>S-adenosyl-L-methionine</name>
        <dbReference type="ChEBI" id="CHEBI:59789"/>
    </ligand>
</feature>
<feature type="binding site" evidence="1">
    <location>
        <position position="107"/>
    </location>
    <ligand>
        <name>S-adenosyl-L-methionine</name>
        <dbReference type="ChEBI" id="CHEBI:59789"/>
    </ligand>
</feature>
<proteinExistence type="inferred from homology"/>
<comment type="function">
    <text evidence="1">Specifically methylates the N4 position of cytidine in position 1402 (C1402) of 16S rRNA.</text>
</comment>
<comment type="catalytic activity">
    <reaction evidence="1">
        <text>cytidine(1402) in 16S rRNA + S-adenosyl-L-methionine = N(4)-methylcytidine(1402) in 16S rRNA + S-adenosyl-L-homocysteine + H(+)</text>
        <dbReference type="Rhea" id="RHEA:42928"/>
        <dbReference type="Rhea" id="RHEA-COMP:10286"/>
        <dbReference type="Rhea" id="RHEA-COMP:10287"/>
        <dbReference type="ChEBI" id="CHEBI:15378"/>
        <dbReference type="ChEBI" id="CHEBI:57856"/>
        <dbReference type="ChEBI" id="CHEBI:59789"/>
        <dbReference type="ChEBI" id="CHEBI:74506"/>
        <dbReference type="ChEBI" id="CHEBI:82748"/>
        <dbReference type="EC" id="2.1.1.199"/>
    </reaction>
</comment>
<comment type="subcellular location">
    <subcellularLocation>
        <location evidence="1">Cytoplasm</location>
    </subcellularLocation>
</comment>
<comment type="similarity">
    <text evidence="1">Belongs to the methyltransferase superfamily. RsmH family.</text>
</comment>
<keyword id="KW-0963">Cytoplasm</keyword>
<keyword id="KW-0489">Methyltransferase</keyword>
<keyword id="KW-0698">rRNA processing</keyword>
<keyword id="KW-0949">S-adenosyl-L-methionine</keyword>
<keyword id="KW-0808">Transferase</keyword>
<organism>
    <name type="scientific">Paramagnetospirillum magneticum (strain ATCC 700264 / AMB-1)</name>
    <name type="common">Magnetospirillum magneticum</name>
    <dbReference type="NCBI Taxonomy" id="342108"/>
    <lineage>
        <taxon>Bacteria</taxon>
        <taxon>Pseudomonadati</taxon>
        <taxon>Pseudomonadota</taxon>
        <taxon>Alphaproteobacteria</taxon>
        <taxon>Rhodospirillales</taxon>
        <taxon>Magnetospirillaceae</taxon>
        <taxon>Paramagnetospirillum</taxon>
    </lineage>
</organism>
<evidence type="ECO:0000255" key="1">
    <source>
        <dbReference type="HAMAP-Rule" id="MF_01007"/>
    </source>
</evidence>
<evidence type="ECO:0000256" key="2">
    <source>
        <dbReference type="SAM" id="MobiDB-lite"/>
    </source>
</evidence>
<reference key="1">
    <citation type="journal article" date="2005" name="DNA Res.">
        <title>Complete genome sequence of the facultative anaerobic magnetotactic bacterium Magnetospirillum sp. strain AMB-1.</title>
        <authorList>
            <person name="Matsunaga T."/>
            <person name="Okamura Y."/>
            <person name="Fukuda Y."/>
            <person name="Wahyudi A.T."/>
            <person name="Murase Y."/>
            <person name="Takeyama H."/>
        </authorList>
    </citation>
    <scope>NUCLEOTIDE SEQUENCE [LARGE SCALE GENOMIC DNA]</scope>
    <source>
        <strain>ATCC 700264 / AMB-1</strain>
    </source>
</reference>